<gene>
    <name evidence="1" type="primary">bioD</name>
    <name type="ordered locus">COSY_0007</name>
</gene>
<proteinExistence type="inferred from homology"/>
<comment type="function">
    <text evidence="1">Catalyzes a mechanistically unusual reaction, the ATP-dependent insertion of CO2 between the N7 and N8 nitrogen atoms of 7,8-diaminopelargonic acid (DAPA, also called 7,8-diammoniononanoate) to form a ureido ring.</text>
</comment>
<comment type="catalytic activity">
    <reaction evidence="1">
        <text>(7R,8S)-7,8-diammoniononanoate + CO2 + ATP = (4R,5S)-dethiobiotin + ADP + phosphate + 3 H(+)</text>
        <dbReference type="Rhea" id="RHEA:15805"/>
        <dbReference type="ChEBI" id="CHEBI:15378"/>
        <dbReference type="ChEBI" id="CHEBI:16526"/>
        <dbReference type="ChEBI" id="CHEBI:30616"/>
        <dbReference type="ChEBI" id="CHEBI:43474"/>
        <dbReference type="ChEBI" id="CHEBI:149469"/>
        <dbReference type="ChEBI" id="CHEBI:149473"/>
        <dbReference type="ChEBI" id="CHEBI:456216"/>
        <dbReference type="EC" id="6.3.3.3"/>
    </reaction>
</comment>
<comment type="cofactor">
    <cofactor evidence="1">
        <name>Mg(2+)</name>
        <dbReference type="ChEBI" id="CHEBI:18420"/>
    </cofactor>
</comment>
<comment type="pathway">
    <text evidence="1">Cofactor biosynthesis; biotin biosynthesis; biotin from 7,8-diaminononanoate: step 1/2.</text>
</comment>
<comment type="subunit">
    <text evidence="1">Homodimer.</text>
</comment>
<comment type="subcellular location">
    <subcellularLocation>
        <location evidence="1">Cytoplasm</location>
    </subcellularLocation>
</comment>
<comment type="similarity">
    <text evidence="1">Belongs to the dethiobiotin synthetase family.</text>
</comment>
<reference key="1">
    <citation type="journal article" date="2007" name="Curr. Biol.">
        <title>Reduced genome of the thioautotrophic intracellular symbiont in a deep-sea clam, Calyptogena okutanii.</title>
        <authorList>
            <person name="Kuwahara H."/>
            <person name="Yoshida T."/>
            <person name="Takaki Y."/>
            <person name="Shimamura S."/>
            <person name="Nishi S."/>
            <person name="Harada M."/>
            <person name="Matsuyama K."/>
            <person name="Takishita K."/>
            <person name="Kawato M."/>
            <person name="Uematsu K."/>
            <person name="Fujiwara Y."/>
            <person name="Sato T."/>
            <person name="Kato C."/>
            <person name="Kitagawa M."/>
            <person name="Kato I."/>
            <person name="Maruyama T."/>
        </authorList>
    </citation>
    <scope>NUCLEOTIDE SEQUENCE [LARGE SCALE GENOMIC DNA]</scope>
    <source>
        <strain>HA</strain>
    </source>
</reference>
<feature type="chain" id="PRO_0000302551" description="ATP-dependent dethiobiotin synthetase BioD">
    <location>
        <begin position="1"/>
        <end position="216"/>
    </location>
</feature>
<feature type="active site" evidence="1">
    <location>
        <position position="36"/>
    </location>
</feature>
<feature type="binding site" evidence="1">
    <location>
        <begin position="12"/>
        <end position="17"/>
    </location>
    <ligand>
        <name>ATP</name>
        <dbReference type="ChEBI" id="CHEBI:30616"/>
    </ligand>
</feature>
<feature type="binding site" evidence="1">
    <location>
        <position position="16"/>
    </location>
    <ligand>
        <name>Mg(2+)</name>
        <dbReference type="ChEBI" id="CHEBI:18420"/>
    </ligand>
</feature>
<feature type="binding site" evidence="1">
    <location>
        <position position="40"/>
    </location>
    <ligand>
        <name>substrate</name>
    </ligand>
</feature>
<feature type="binding site" evidence="1">
    <location>
        <position position="53"/>
    </location>
    <ligand>
        <name>ATP</name>
        <dbReference type="ChEBI" id="CHEBI:30616"/>
    </ligand>
</feature>
<feature type="binding site" evidence="1">
    <location>
        <position position="53"/>
    </location>
    <ligand>
        <name>Mg(2+)</name>
        <dbReference type="ChEBI" id="CHEBI:18420"/>
    </ligand>
</feature>
<feature type="binding site" evidence="1">
    <location>
        <begin position="110"/>
        <end position="113"/>
    </location>
    <ligand>
        <name>ATP</name>
        <dbReference type="ChEBI" id="CHEBI:30616"/>
    </ligand>
</feature>
<feature type="binding site" evidence="1">
    <location>
        <position position="110"/>
    </location>
    <ligand>
        <name>Mg(2+)</name>
        <dbReference type="ChEBI" id="CHEBI:18420"/>
    </ligand>
</feature>
<feature type="binding site" evidence="1">
    <location>
        <begin position="170"/>
        <end position="171"/>
    </location>
    <ligand>
        <name>ATP</name>
        <dbReference type="ChEBI" id="CHEBI:30616"/>
    </ligand>
</feature>
<name>BIOD_VESOH</name>
<organism>
    <name type="scientific">Vesicomyosocius okutanii subsp. Calyptogena okutanii (strain HA)</name>
    <dbReference type="NCBI Taxonomy" id="412965"/>
    <lineage>
        <taxon>Bacteria</taxon>
        <taxon>Pseudomonadati</taxon>
        <taxon>Pseudomonadota</taxon>
        <taxon>Gammaproteobacteria</taxon>
        <taxon>Candidatus Pseudothioglobaceae</taxon>
        <taxon>Candidatus Vesicomyosocius</taxon>
    </lineage>
</organism>
<dbReference type="EC" id="6.3.3.3" evidence="1"/>
<dbReference type="EMBL" id="AP009247">
    <property type="protein sequence ID" value="BAF61146.1"/>
    <property type="molecule type" value="Genomic_DNA"/>
</dbReference>
<dbReference type="RefSeq" id="WP_011929416.1">
    <property type="nucleotide sequence ID" value="NC_009465.1"/>
</dbReference>
<dbReference type="SMR" id="A5CY11"/>
<dbReference type="STRING" id="412965.COSY_0007"/>
<dbReference type="KEGG" id="vok:COSY_0007"/>
<dbReference type="eggNOG" id="COG0132">
    <property type="taxonomic scope" value="Bacteria"/>
</dbReference>
<dbReference type="HOGENOM" id="CLU_072551_3_1_6"/>
<dbReference type="OrthoDB" id="9802097at2"/>
<dbReference type="UniPathway" id="UPA00078">
    <property type="reaction ID" value="UER00161"/>
</dbReference>
<dbReference type="Proteomes" id="UP000000247">
    <property type="component" value="Chromosome"/>
</dbReference>
<dbReference type="GO" id="GO:0005829">
    <property type="term" value="C:cytosol"/>
    <property type="evidence" value="ECO:0007669"/>
    <property type="project" value="TreeGrafter"/>
</dbReference>
<dbReference type="GO" id="GO:0005524">
    <property type="term" value="F:ATP binding"/>
    <property type="evidence" value="ECO:0007669"/>
    <property type="project" value="UniProtKB-UniRule"/>
</dbReference>
<dbReference type="GO" id="GO:0004141">
    <property type="term" value="F:dethiobiotin synthase activity"/>
    <property type="evidence" value="ECO:0007669"/>
    <property type="project" value="UniProtKB-UniRule"/>
</dbReference>
<dbReference type="GO" id="GO:0000287">
    <property type="term" value="F:magnesium ion binding"/>
    <property type="evidence" value="ECO:0007669"/>
    <property type="project" value="UniProtKB-UniRule"/>
</dbReference>
<dbReference type="GO" id="GO:0009102">
    <property type="term" value="P:biotin biosynthetic process"/>
    <property type="evidence" value="ECO:0007669"/>
    <property type="project" value="UniProtKB-UniRule"/>
</dbReference>
<dbReference type="CDD" id="cd03109">
    <property type="entry name" value="DTBS"/>
    <property type="match status" value="1"/>
</dbReference>
<dbReference type="Gene3D" id="3.40.50.300">
    <property type="entry name" value="P-loop containing nucleotide triphosphate hydrolases"/>
    <property type="match status" value="1"/>
</dbReference>
<dbReference type="HAMAP" id="MF_00336">
    <property type="entry name" value="BioD"/>
    <property type="match status" value="1"/>
</dbReference>
<dbReference type="InterPro" id="IPR004472">
    <property type="entry name" value="DTB_synth_BioD"/>
</dbReference>
<dbReference type="InterPro" id="IPR027417">
    <property type="entry name" value="P-loop_NTPase"/>
</dbReference>
<dbReference type="NCBIfam" id="TIGR00347">
    <property type="entry name" value="bioD"/>
    <property type="match status" value="1"/>
</dbReference>
<dbReference type="PANTHER" id="PTHR43210:SF2">
    <property type="entry name" value="ATP-DEPENDENT DETHIOBIOTIN SYNTHETASE BIOD 2"/>
    <property type="match status" value="1"/>
</dbReference>
<dbReference type="PANTHER" id="PTHR43210">
    <property type="entry name" value="DETHIOBIOTIN SYNTHETASE"/>
    <property type="match status" value="1"/>
</dbReference>
<dbReference type="Pfam" id="PF13500">
    <property type="entry name" value="AAA_26"/>
    <property type="match status" value="1"/>
</dbReference>
<dbReference type="PIRSF" id="PIRSF006755">
    <property type="entry name" value="DTB_synth"/>
    <property type="match status" value="1"/>
</dbReference>
<dbReference type="SUPFAM" id="SSF52540">
    <property type="entry name" value="P-loop containing nucleoside triphosphate hydrolases"/>
    <property type="match status" value="1"/>
</dbReference>
<evidence type="ECO:0000255" key="1">
    <source>
        <dbReference type="HAMAP-Rule" id="MF_00336"/>
    </source>
</evidence>
<keyword id="KW-0067">ATP-binding</keyword>
<keyword id="KW-0093">Biotin biosynthesis</keyword>
<keyword id="KW-0963">Cytoplasm</keyword>
<keyword id="KW-0436">Ligase</keyword>
<keyword id="KW-0460">Magnesium</keyword>
<keyword id="KW-0479">Metal-binding</keyword>
<keyword id="KW-0547">Nucleotide-binding</keyword>
<keyword id="KW-1185">Reference proteome</keyword>
<protein>
    <recommendedName>
        <fullName evidence="1">ATP-dependent dethiobiotin synthetase BioD</fullName>
        <ecNumber evidence="1">6.3.3.3</ecNumber>
    </recommendedName>
    <alternativeName>
        <fullName evidence="1">DTB synthetase</fullName>
        <shortName evidence="1">DTBS</shortName>
    </alternativeName>
    <alternativeName>
        <fullName evidence="1">Dethiobiotin synthase</fullName>
    </alternativeName>
</protein>
<sequence length="216" mass="23634">MKGLFISGSGTNVGKTFIAQYLIKFLTNILKVRVRKPVESDCKNKNGKLIPKDALLLSKACNIIESIDKICRYKFQACSSAQIASQALGLKLTLDDLVDACIADEFVVVEGAGGLLSPIATKTLNSDLVQAINVPVVLVIKDELGAVNQALLSINAAQHYKLNISMVVLNQIYPNLLGNEKEITQYTNANIVVFNQNDLKSFERQIEKILLADLIK</sequence>
<accession>A5CY11</accession>